<reference key="1">
    <citation type="submission" date="2008-05" db="EMBL/GenBank/DDBJ databases">
        <title>Complete genome sequence of Clostridium botulinum E3 str. Alaska E43.</title>
        <authorList>
            <person name="Brinkac L.M."/>
            <person name="Brown J.L."/>
            <person name="Bruce D."/>
            <person name="Detter C."/>
            <person name="Munk C."/>
            <person name="Smith L.A."/>
            <person name="Smith T.J."/>
            <person name="Sutton G."/>
            <person name="Brettin T.S."/>
        </authorList>
    </citation>
    <scope>NUCLEOTIDE SEQUENCE [LARGE SCALE GENOMIC DNA]</scope>
    <source>
        <strain>Alaska E43 / Type E3</strain>
    </source>
</reference>
<accession>B2V4G5</accession>
<feature type="chain" id="PRO_1000136746" description="Ribosome maturation factor RimP">
    <location>
        <begin position="1"/>
        <end position="153"/>
    </location>
</feature>
<gene>
    <name evidence="1" type="primary">rimP</name>
    <name type="ordered locus">CLH_1220</name>
</gene>
<evidence type="ECO:0000255" key="1">
    <source>
        <dbReference type="HAMAP-Rule" id="MF_01077"/>
    </source>
</evidence>
<dbReference type="EMBL" id="CP001078">
    <property type="protein sequence ID" value="ACD52469.1"/>
    <property type="molecule type" value="Genomic_DNA"/>
</dbReference>
<dbReference type="RefSeq" id="WP_012450607.1">
    <property type="nucleotide sequence ID" value="NC_010723.1"/>
</dbReference>
<dbReference type="SMR" id="B2V4G5"/>
<dbReference type="KEGG" id="cbt:CLH_1220"/>
<dbReference type="HOGENOM" id="CLU_070525_2_0_9"/>
<dbReference type="GO" id="GO:0005829">
    <property type="term" value="C:cytosol"/>
    <property type="evidence" value="ECO:0007669"/>
    <property type="project" value="TreeGrafter"/>
</dbReference>
<dbReference type="GO" id="GO:0000028">
    <property type="term" value="P:ribosomal small subunit assembly"/>
    <property type="evidence" value="ECO:0007669"/>
    <property type="project" value="TreeGrafter"/>
</dbReference>
<dbReference type="GO" id="GO:0006412">
    <property type="term" value="P:translation"/>
    <property type="evidence" value="ECO:0007669"/>
    <property type="project" value="TreeGrafter"/>
</dbReference>
<dbReference type="CDD" id="cd01734">
    <property type="entry name" value="YlxS_C"/>
    <property type="match status" value="1"/>
</dbReference>
<dbReference type="FunFam" id="3.30.300.70:FF:000001">
    <property type="entry name" value="Ribosome maturation factor RimP"/>
    <property type="match status" value="1"/>
</dbReference>
<dbReference type="Gene3D" id="2.30.30.180">
    <property type="entry name" value="Ribosome maturation factor RimP, C-terminal domain"/>
    <property type="match status" value="1"/>
</dbReference>
<dbReference type="Gene3D" id="3.30.300.70">
    <property type="entry name" value="RimP-like superfamily, N-terminal"/>
    <property type="match status" value="1"/>
</dbReference>
<dbReference type="HAMAP" id="MF_01077">
    <property type="entry name" value="RimP"/>
    <property type="match status" value="1"/>
</dbReference>
<dbReference type="InterPro" id="IPR003728">
    <property type="entry name" value="Ribosome_maturation_RimP"/>
</dbReference>
<dbReference type="InterPro" id="IPR028998">
    <property type="entry name" value="RimP_C"/>
</dbReference>
<dbReference type="InterPro" id="IPR036847">
    <property type="entry name" value="RimP_C_sf"/>
</dbReference>
<dbReference type="InterPro" id="IPR028989">
    <property type="entry name" value="RimP_N"/>
</dbReference>
<dbReference type="InterPro" id="IPR035956">
    <property type="entry name" value="RimP_N_sf"/>
</dbReference>
<dbReference type="NCBIfam" id="NF000934">
    <property type="entry name" value="PRK00092.3-1"/>
    <property type="match status" value="1"/>
</dbReference>
<dbReference type="PANTHER" id="PTHR33867">
    <property type="entry name" value="RIBOSOME MATURATION FACTOR RIMP"/>
    <property type="match status" value="1"/>
</dbReference>
<dbReference type="PANTHER" id="PTHR33867:SF1">
    <property type="entry name" value="RIBOSOME MATURATION FACTOR RIMP"/>
    <property type="match status" value="1"/>
</dbReference>
<dbReference type="Pfam" id="PF17384">
    <property type="entry name" value="DUF150_C"/>
    <property type="match status" value="1"/>
</dbReference>
<dbReference type="Pfam" id="PF02576">
    <property type="entry name" value="RimP_N"/>
    <property type="match status" value="1"/>
</dbReference>
<dbReference type="SUPFAM" id="SSF74942">
    <property type="entry name" value="YhbC-like, C-terminal domain"/>
    <property type="match status" value="1"/>
</dbReference>
<dbReference type="SUPFAM" id="SSF75420">
    <property type="entry name" value="YhbC-like, N-terminal domain"/>
    <property type="match status" value="1"/>
</dbReference>
<name>RIMP_CLOBA</name>
<proteinExistence type="inferred from homology"/>
<protein>
    <recommendedName>
        <fullName evidence="1">Ribosome maturation factor RimP</fullName>
    </recommendedName>
</protein>
<comment type="function">
    <text evidence="1">Required for maturation of 30S ribosomal subunits.</text>
</comment>
<comment type="subcellular location">
    <subcellularLocation>
        <location evidence="1">Cytoplasm</location>
    </subcellularLocation>
</comment>
<comment type="similarity">
    <text evidence="1">Belongs to the RimP family.</text>
</comment>
<organism>
    <name type="scientific">Clostridium botulinum (strain Alaska E43 / Type E3)</name>
    <dbReference type="NCBI Taxonomy" id="508767"/>
    <lineage>
        <taxon>Bacteria</taxon>
        <taxon>Bacillati</taxon>
        <taxon>Bacillota</taxon>
        <taxon>Clostridia</taxon>
        <taxon>Eubacteriales</taxon>
        <taxon>Clostridiaceae</taxon>
        <taxon>Clostridium</taxon>
    </lineage>
</organism>
<sequence length="153" mass="17921">MRKDMLLEKVEVLVKPIVEELSYELYYLEYVKENGEYYLRIYIDKEEDSISLNDCEKVSRRVSEILDVEDPIEDSYYLEVSSPGLNRGLYKEEHFKKFIGREVLVRFNGSLEGMKKIQGILKEAENEFITVEGEKELKIPTEKIKGANLEGEI</sequence>
<keyword id="KW-0963">Cytoplasm</keyword>
<keyword id="KW-0690">Ribosome biogenesis</keyword>